<keyword id="KW-0001">2Fe-2S</keyword>
<keyword id="KW-0408">Iron</keyword>
<keyword id="KW-0411">Iron-sulfur</keyword>
<keyword id="KW-0479">Metal-binding</keyword>
<keyword id="KW-0503">Monooxygenase</keyword>
<keyword id="KW-0521">NADP</keyword>
<keyword id="KW-0560">Oxidoreductase</keyword>
<name>MDPJ_AQUTE</name>
<reference key="1">
    <citation type="submission" date="2011-05" db="EMBL/GenBank/DDBJ databases">
        <authorList>
            <person name="Schaefer F."/>
            <person name="Breuer U."/>
            <person name="Benndorf D."/>
            <person name="von Bergen M."/>
            <person name="Harms H."/>
            <person name="Mueller R.H."/>
        </authorList>
    </citation>
    <scope>NUCLEOTIDE SEQUENCE [GENOMIC DNA]</scope>
    <source>
        <strain>L108</strain>
    </source>
</reference>
<reference key="2">
    <citation type="journal article" date="2012" name="J. Bacteriol.">
        <title>Bacterial degradation of tert-amyl alcohol proceeds via hemiterpene 2-methyl-3-buten-2-ol by employing the tertiary alcohol desaturase function of the Rieske nonheme mononuclear iron oxygenase MdpJ.</title>
        <authorList>
            <person name="Schuster J."/>
            <person name="Schaefer F."/>
            <person name="Huebler N."/>
            <person name="Brandt A."/>
            <person name="Rosell M."/>
            <person name="Haertig C."/>
            <person name="Harms H."/>
            <person name="Mueller R.H."/>
            <person name="Rohwerder T."/>
        </authorList>
    </citation>
    <scope>NUCLEOTIDE SEQUENCE [GENOMIC DNA]</scope>
    <scope>FUNCTION</scope>
    <scope>CATALYTIC ACTIVITY</scope>
    <scope>SUBUNIT</scope>
    <scope>DISRUPTION PHENOTYPE</scope>
    <source>
        <strain>L108</strain>
    </source>
</reference>
<reference key="3">
    <citation type="journal article" date="2007" name="Eng. Life Sci.">
        <title>Growth of Aquincola tertiaricarbonis L108 on tert-butyl alcohol leads to the induction of a phthalate dioxygenase-related protein and its associated oxidoreductase subunit.</title>
        <authorList>
            <person name="Schaefer F."/>
            <person name="Breuer U."/>
            <person name="Benndorf D."/>
            <person name="von Bergen M."/>
            <person name="Harms H."/>
            <person name="Mueller R.H."/>
        </authorList>
    </citation>
    <scope>INDUCTION</scope>
    <source>
        <strain>L108</strain>
    </source>
</reference>
<reference key="4">
    <citation type="journal article" date="2012" name="Appl. Environ. Microbiol.">
        <title>Synthesis of short-chain diols and unsaturated alcohols from secondary alcohol substrates by the Rieske nonheme mononuclear iron oxygenase MdpJ.</title>
        <authorList>
            <person name="Schaefer F."/>
            <person name="Schuster J."/>
            <person name="Wuerz B."/>
            <person name="Haertig C."/>
            <person name="Harms H."/>
            <person name="Mueller R.H."/>
            <person name="Rohwerder T."/>
        </authorList>
    </citation>
    <scope>FUNCTION</scope>
    <scope>BIOTECHNOLOGY</scope>
    <source>
        <strain>L108</strain>
    </source>
</reference>
<protein>
    <recommendedName>
        <fullName evidence="7">Tert-butanol monooxygenase / tert-amyl alcohol desaturase oxygenase subunit</fullName>
        <ecNumber evidence="2">1.14.13.229</ecNumber>
        <ecNumber evidence="2">1.14.19.48</ecNumber>
    </recommendedName>
    <alternativeName>
        <fullName evidence="5">Rieske nonheme mononuclear iron oxygenase MdpJ</fullName>
    </alternativeName>
</protein>
<dbReference type="EC" id="1.14.13.229" evidence="2"/>
<dbReference type="EC" id="1.14.19.48" evidence="2"/>
<dbReference type="EMBL" id="JN033363">
    <property type="protein sequence ID" value="AER12131.1"/>
    <property type="molecule type" value="Genomic_DNA"/>
</dbReference>
<dbReference type="EMBL" id="JQ062962">
    <property type="protein sequence ID" value="AEX20406.1"/>
    <property type="molecule type" value="Genomic_DNA"/>
</dbReference>
<dbReference type="SMR" id="G8FRC5"/>
<dbReference type="KEGG" id="ag:AEX20406"/>
<dbReference type="BRENDA" id="1.14.13.229">
    <property type="organism ID" value="14508"/>
</dbReference>
<dbReference type="BRENDA" id="1.14.19.48">
    <property type="organism ID" value="14508"/>
</dbReference>
<dbReference type="GO" id="GO:0051537">
    <property type="term" value="F:2 iron, 2 sulfur cluster binding"/>
    <property type="evidence" value="ECO:0007669"/>
    <property type="project" value="UniProtKB-KW"/>
</dbReference>
<dbReference type="GO" id="GO:0005506">
    <property type="term" value="F:iron ion binding"/>
    <property type="evidence" value="ECO:0007669"/>
    <property type="project" value="InterPro"/>
</dbReference>
<dbReference type="GO" id="GO:0004497">
    <property type="term" value="F:monooxygenase activity"/>
    <property type="evidence" value="ECO:0007669"/>
    <property type="project" value="UniProtKB-KW"/>
</dbReference>
<dbReference type="CDD" id="cd03479">
    <property type="entry name" value="Rieske_RO_Alpha_PhDO_like"/>
    <property type="match status" value="1"/>
</dbReference>
<dbReference type="Gene3D" id="3.90.380.10">
    <property type="entry name" value="Naphthalene 1,2-dioxygenase Alpha Subunit, Chain A, domain 1"/>
    <property type="match status" value="1"/>
</dbReference>
<dbReference type="Gene3D" id="2.102.10.10">
    <property type="entry name" value="Rieske [2Fe-2S] iron-sulphur domain"/>
    <property type="match status" value="1"/>
</dbReference>
<dbReference type="InterPro" id="IPR050584">
    <property type="entry name" value="Cholesterol_7-desaturase"/>
</dbReference>
<dbReference type="InterPro" id="IPR017941">
    <property type="entry name" value="Rieske_2Fe-2S"/>
</dbReference>
<dbReference type="InterPro" id="IPR036922">
    <property type="entry name" value="Rieske_2Fe-2S_sf"/>
</dbReference>
<dbReference type="InterPro" id="IPR015881">
    <property type="entry name" value="Ring-hydroxy_dOase_2Fe2S_BS"/>
</dbReference>
<dbReference type="PANTHER" id="PTHR21266:SF59">
    <property type="entry name" value="BLR4922 PROTEIN"/>
    <property type="match status" value="1"/>
</dbReference>
<dbReference type="PANTHER" id="PTHR21266">
    <property type="entry name" value="IRON-SULFUR DOMAIN CONTAINING PROTEIN"/>
    <property type="match status" value="1"/>
</dbReference>
<dbReference type="Pfam" id="PF00355">
    <property type="entry name" value="Rieske"/>
    <property type="match status" value="1"/>
</dbReference>
<dbReference type="SUPFAM" id="SSF55961">
    <property type="entry name" value="Bet v1-like"/>
    <property type="match status" value="1"/>
</dbReference>
<dbReference type="SUPFAM" id="SSF50022">
    <property type="entry name" value="ISP domain"/>
    <property type="match status" value="1"/>
</dbReference>
<dbReference type="PROSITE" id="PS51296">
    <property type="entry name" value="RIESKE"/>
    <property type="match status" value="1"/>
</dbReference>
<dbReference type="PROSITE" id="PS00570">
    <property type="entry name" value="RING_HYDROXYL_ALPHA"/>
    <property type="match status" value="1"/>
</dbReference>
<sequence>MGNREPLAAAGQGTAYSGYRLRDLQNVAPTNLEILRTGPGTPMGEYMRRYWQPVCLSQELTDVPKAIRILHEDLVAFRDRRGNVGVLHRKCAHRGASLEFGIVQERGIRCCYHGWHFDVDGSLLEAPAEPPDTKLKETVCQGAYPAFERNGLVFAYMGPADRRPEFPVFDGYVLPKGTRLIPFSNVFDCNWLQVYENQIDHYHTALLHNNMTVAGVDAKLADGATLQGGFGEMPIIDWHPTDDNNGMIFTAGRRLSDDEVWIRISQMGLPNWMQNAAIVAAAPQRHSGPAMSRWQVPVDDEHSIAFGWRHFNDEVDPEHRGREEECGVDKIDFLIGQTRHRPYEETQRVPGDYEAIVSQGPIALHGLEHPGRSDVGVYMCRSLLRDAVAGKAPPDPVRVKAGSTDGQTLPRYASDSRLRIRRRPSREADSDVIRKAAHQVFAIMKECDELPVVQRRPHVLRRLDEIEASL</sequence>
<accession>G8FRC5</accession>
<proteinExistence type="evidence at protein level"/>
<feature type="chain" id="PRO_0000455120" description="Tert-butanol monooxygenase / tert-amyl alcohol desaturase oxygenase subunit">
    <location>
        <begin position="1"/>
        <end position="470"/>
    </location>
</feature>
<feature type="domain" description="Rieske" evidence="1">
    <location>
        <begin position="51"/>
        <end position="155"/>
    </location>
</feature>
<feature type="binding site" evidence="1">
    <location>
        <position position="91"/>
    </location>
    <ligand>
        <name>[2Fe-2S] cluster</name>
        <dbReference type="ChEBI" id="CHEBI:190135"/>
    </ligand>
</feature>
<feature type="binding site" evidence="1">
    <location>
        <position position="93"/>
    </location>
    <ligand>
        <name>[2Fe-2S] cluster</name>
        <dbReference type="ChEBI" id="CHEBI:190135"/>
    </ligand>
</feature>
<feature type="binding site" evidence="1">
    <location>
        <position position="110"/>
    </location>
    <ligand>
        <name>[2Fe-2S] cluster</name>
        <dbReference type="ChEBI" id="CHEBI:190135"/>
    </ligand>
</feature>
<feature type="binding site" evidence="1">
    <location>
        <position position="113"/>
    </location>
    <ligand>
        <name>[2Fe-2S] cluster</name>
        <dbReference type="ChEBI" id="CHEBI:190135"/>
    </ligand>
</feature>
<comment type="function">
    <text evidence="2 3">Oxygenase component of a two-component system involved in the degradation of tertiary alcohols such as tert-butyl alcohol (TBA) and tert-amyl alcohol (TAA). In the presence of TBA, catalyzes the hydroxylation of TBA to 2-methylpropane-1,2-diol. In the presence of TAA, functions as a desaturase, enabling the degradation of TAA and resulting in the formation of the hemiterpene 3-hydroxy-3-methylbut-1-ene. The specificity of the catalysis depends strongly on the molecule structure of the substrate, allowing either hydroxylation or desaturation reactions (PubMed:22194447). Also catalyzes the desaturation of the tertiary alcohol 3-methyl-3-pentanol (a C6 homolog of TBA and TAA) to 3-methyl-1-penten-3-ol, with lower efficiency (PubMed:22194447). In addition, can transform some secondary alcohols, including the hydroxylation of 2-propanol to 1,2-propanediol, and the desaturation of 2-butanol, 3-methyl-2-butanol and 3-pentanol (PubMed:22752178).</text>
</comment>
<comment type="catalytic activity">
    <reaction evidence="2">
        <text>tert-butanol + NADPH + O2 + H(+) = 2-methylpropane-1,2-diol + NADP(+) + H2O</text>
        <dbReference type="Rhea" id="RHEA:50012"/>
        <dbReference type="ChEBI" id="CHEBI:15377"/>
        <dbReference type="ChEBI" id="CHEBI:15378"/>
        <dbReference type="ChEBI" id="CHEBI:15379"/>
        <dbReference type="ChEBI" id="CHEBI:45895"/>
        <dbReference type="ChEBI" id="CHEBI:57783"/>
        <dbReference type="ChEBI" id="CHEBI:58349"/>
        <dbReference type="ChEBI" id="CHEBI:131845"/>
        <dbReference type="EC" id="1.14.13.229"/>
    </reaction>
    <physiologicalReaction direction="left-to-right" evidence="2">
        <dbReference type="Rhea" id="RHEA:50013"/>
    </physiologicalReaction>
</comment>
<comment type="catalytic activity">
    <reaction evidence="2">
        <text>2-methylbutan-2-ol + NADPH + O2 + H(+) = 3-hydroxy-3-methylbut-1-ene + NADP(+) + 2 H2O</text>
        <dbReference type="Rhea" id="RHEA:50368"/>
        <dbReference type="ChEBI" id="CHEBI:15377"/>
        <dbReference type="ChEBI" id="CHEBI:15378"/>
        <dbReference type="ChEBI" id="CHEBI:15379"/>
        <dbReference type="ChEBI" id="CHEBI:57783"/>
        <dbReference type="ChEBI" id="CHEBI:58349"/>
        <dbReference type="ChEBI" id="CHEBI:132750"/>
        <dbReference type="ChEBI" id="CHEBI:132752"/>
        <dbReference type="EC" id="1.14.19.48"/>
    </reaction>
    <physiologicalReaction direction="left-to-right" evidence="2">
        <dbReference type="Rhea" id="RHEA:50369"/>
    </physiologicalReaction>
</comment>
<comment type="cofactor">
    <cofactor evidence="1">
        <name>[2Fe-2S] cluster</name>
        <dbReference type="ChEBI" id="CHEBI:190135"/>
    </cofactor>
    <text evidence="1">Binds 1 [2Fe-2S] cluster per subunit.</text>
</comment>
<comment type="subunit">
    <text evidence="2">This two-component enzyme is composed of an oxygenase (MdpJ) and a reductase (MdpK).</text>
</comment>
<comment type="induction">
    <text evidence="4">Induced in the presence of tert-butyl alcohol (TBA).</text>
</comment>
<comment type="disruption phenotype">
    <text evidence="2">Mutants are not able to grow on the tertiary alcohols TBA and TAA.</text>
</comment>
<comment type="biotechnology">
    <text evidence="3">Shows a biotechnological potential for the synthesis of enantiopure short-chain diols and unsaturated alcohols from secondary alcoholic precursors.</text>
</comment>
<comment type="similarity">
    <text evidence="7">Belongs to the bacterial ring-hydroxylating dioxygenase alpha subunit family.</text>
</comment>
<gene>
    <name evidence="6" type="primary">mdpJ</name>
</gene>
<organism>
    <name type="scientific">Aquincola tertiaricarbonis</name>
    <dbReference type="NCBI Taxonomy" id="391953"/>
    <lineage>
        <taxon>Bacteria</taxon>
        <taxon>Pseudomonadati</taxon>
        <taxon>Pseudomonadota</taxon>
        <taxon>Betaproteobacteria</taxon>
        <taxon>Burkholderiales</taxon>
        <taxon>Sphaerotilaceae</taxon>
        <taxon>Aquincola</taxon>
    </lineage>
</organism>
<evidence type="ECO:0000255" key="1">
    <source>
        <dbReference type="PROSITE-ProRule" id="PRU00628"/>
    </source>
</evidence>
<evidence type="ECO:0000269" key="2">
    <source>
    </source>
</evidence>
<evidence type="ECO:0000269" key="3">
    <source>
    </source>
</evidence>
<evidence type="ECO:0000269" key="4">
    <source ref="3"/>
</evidence>
<evidence type="ECO:0000303" key="5">
    <source>
    </source>
</evidence>
<evidence type="ECO:0000303" key="6">
    <source ref="1"/>
</evidence>
<evidence type="ECO:0000305" key="7"/>